<name>UVRC_BORBR</name>
<protein>
    <recommendedName>
        <fullName evidence="1">UvrABC system protein C</fullName>
        <shortName evidence="1">Protein UvrC</shortName>
    </recommendedName>
    <alternativeName>
        <fullName evidence="1">Excinuclease ABC subunit C</fullName>
    </alternativeName>
</protein>
<feature type="chain" id="PRO_0000264871" description="UvrABC system protein C">
    <location>
        <begin position="1"/>
        <end position="609"/>
    </location>
</feature>
<feature type="domain" description="GIY-YIG" evidence="1">
    <location>
        <begin position="16"/>
        <end position="94"/>
    </location>
</feature>
<feature type="domain" description="UVR" evidence="1">
    <location>
        <begin position="203"/>
        <end position="238"/>
    </location>
</feature>
<keyword id="KW-0963">Cytoplasm</keyword>
<keyword id="KW-0227">DNA damage</keyword>
<keyword id="KW-0228">DNA excision</keyword>
<keyword id="KW-0234">DNA repair</keyword>
<keyword id="KW-0267">Excision nuclease</keyword>
<keyword id="KW-0742">SOS response</keyword>
<comment type="function">
    <text evidence="1">The UvrABC repair system catalyzes the recognition and processing of DNA lesions. UvrC both incises the 5' and 3' sides of the lesion. The N-terminal half is responsible for the 3' incision and the C-terminal half is responsible for the 5' incision.</text>
</comment>
<comment type="subunit">
    <text evidence="1">Interacts with UvrB in an incision complex.</text>
</comment>
<comment type="subcellular location">
    <subcellularLocation>
        <location evidence="1">Cytoplasm</location>
    </subcellularLocation>
</comment>
<comment type="similarity">
    <text evidence="1">Belongs to the UvrC family.</text>
</comment>
<comment type="sequence caution" evidence="2">
    <conflict type="erroneous initiation">
        <sequence resource="EMBL-CDS" id="CAE33835"/>
    </conflict>
</comment>
<dbReference type="EMBL" id="BX640447">
    <property type="protein sequence ID" value="CAE33835.1"/>
    <property type="status" value="ALT_INIT"/>
    <property type="molecule type" value="Genomic_DNA"/>
</dbReference>
<dbReference type="RefSeq" id="WP_033449735.1">
    <property type="nucleotide sequence ID" value="NC_002927.3"/>
</dbReference>
<dbReference type="SMR" id="Q7WH66"/>
<dbReference type="GeneID" id="93203529"/>
<dbReference type="KEGG" id="bbr:BB3343"/>
<dbReference type="eggNOG" id="COG0322">
    <property type="taxonomic scope" value="Bacteria"/>
</dbReference>
<dbReference type="HOGENOM" id="CLU_014841_3_0_4"/>
<dbReference type="Proteomes" id="UP000001027">
    <property type="component" value="Chromosome"/>
</dbReference>
<dbReference type="GO" id="GO:0005737">
    <property type="term" value="C:cytoplasm"/>
    <property type="evidence" value="ECO:0007669"/>
    <property type="project" value="UniProtKB-SubCell"/>
</dbReference>
<dbReference type="GO" id="GO:0009380">
    <property type="term" value="C:excinuclease repair complex"/>
    <property type="evidence" value="ECO:0007669"/>
    <property type="project" value="InterPro"/>
</dbReference>
<dbReference type="GO" id="GO:0003677">
    <property type="term" value="F:DNA binding"/>
    <property type="evidence" value="ECO:0007669"/>
    <property type="project" value="UniProtKB-UniRule"/>
</dbReference>
<dbReference type="GO" id="GO:0009381">
    <property type="term" value="F:excinuclease ABC activity"/>
    <property type="evidence" value="ECO:0007669"/>
    <property type="project" value="UniProtKB-UniRule"/>
</dbReference>
<dbReference type="GO" id="GO:0006289">
    <property type="term" value="P:nucleotide-excision repair"/>
    <property type="evidence" value="ECO:0007669"/>
    <property type="project" value="UniProtKB-UniRule"/>
</dbReference>
<dbReference type="GO" id="GO:0009432">
    <property type="term" value="P:SOS response"/>
    <property type="evidence" value="ECO:0007669"/>
    <property type="project" value="UniProtKB-UniRule"/>
</dbReference>
<dbReference type="CDD" id="cd10434">
    <property type="entry name" value="GIY-YIG_UvrC_Cho"/>
    <property type="match status" value="1"/>
</dbReference>
<dbReference type="FunFam" id="3.30.420.340:FF:000001">
    <property type="entry name" value="UvrABC system protein C"/>
    <property type="match status" value="1"/>
</dbReference>
<dbReference type="FunFam" id="3.40.1440.10:FF:000001">
    <property type="entry name" value="UvrABC system protein C"/>
    <property type="match status" value="1"/>
</dbReference>
<dbReference type="Gene3D" id="1.10.150.20">
    <property type="entry name" value="5' to 3' exonuclease, C-terminal subdomain"/>
    <property type="match status" value="1"/>
</dbReference>
<dbReference type="Gene3D" id="3.40.1440.10">
    <property type="entry name" value="GIY-YIG endonuclease"/>
    <property type="match status" value="1"/>
</dbReference>
<dbReference type="Gene3D" id="4.10.860.10">
    <property type="entry name" value="UVR domain"/>
    <property type="match status" value="1"/>
</dbReference>
<dbReference type="Gene3D" id="3.30.420.340">
    <property type="entry name" value="UvrC, RNAse H endonuclease domain"/>
    <property type="match status" value="1"/>
</dbReference>
<dbReference type="HAMAP" id="MF_00203">
    <property type="entry name" value="UvrC"/>
    <property type="match status" value="1"/>
</dbReference>
<dbReference type="InterPro" id="IPR000305">
    <property type="entry name" value="GIY-YIG_endonuc"/>
</dbReference>
<dbReference type="InterPro" id="IPR035901">
    <property type="entry name" value="GIY-YIG_endonuc_sf"/>
</dbReference>
<dbReference type="InterPro" id="IPR047296">
    <property type="entry name" value="GIY-YIG_UvrC_Cho"/>
</dbReference>
<dbReference type="InterPro" id="IPR003583">
    <property type="entry name" value="Hlx-hairpin-Hlx_DNA-bd_motif"/>
</dbReference>
<dbReference type="InterPro" id="IPR010994">
    <property type="entry name" value="RuvA_2-like"/>
</dbReference>
<dbReference type="InterPro" id="IPR001943">
    <property type="entry name" value="UVR_dom"/>
</dbReference>
<dbReference type="InterPro" id="IPR036876">
    <property type="entry name" value="UVR_dom_sf"/>
</dbReference>
<dbReference type="InterPro" id="IPR050066">
    <property type="entry name" value="UvrABC_protein_C"/>
</dbReference>
<dbReference type="InterPro" id="IPR004791">
    <property type="entry name" value="UvrC"/>
</dbReference>
<dbReference type="InterPro" id="IPR001162">
    <property type="entry name" value="UvrC_RNase_H_dom"/>
</dbReference>
<dbReference type="InterPro" id="IPR038476">
    <property type="entry name" value="UvrC_RNase_H_dom_sf"/>
</dbReference>
<dbReference type="NCBIfam" id="NF001824">
    <property type="entry name" value="PRK00558.1-5"/>
    <property type="match status" value="1"/>
</dbReference>
<dbReference type="NCBIfam" id="TIGR00194">
    <property type="entry name" value="uvrC"/>
    <property type="match status" value="1"/>
</dbReference>
<dbReference type="PANTHER" id="PTHR30562:SF1">
    <property type="entry name" value="UVRABC SYSTEM PROTEIN C"/>
    <property type="match status" value="1"/>
</dbReference>
<dbReference type="PANTHER" id="PTHR30562">
    <property type="entry name" value="UVRC/OXIDOREDUCTASE"/>
    <property type="match status" value="1"/>
</dbReference>
<dbReference type="Pfam" id="PF01541">
    <property type="entry name" value="GIY-YIG"/>
    <property type="match status" value="1"/>
</dbReference>
<dbReference type="Pfam" id="PF14520">
    <property type="entry name" value="HHH_5"/>
    <property type="match status" value="1"/>
</dbReference>
<dbReference type="Pfam" id="PF02151">
    <property type="entry name" value="UVR"/>
    <property type="match status" value="1"/>
</dbReference>
<dbReference type="Pfam" id="PF22920">
    <property type="entry name" value="UvrC_RNaseH"/>
    <property type="match status" value="1"/>
</dbReference>
<dbReference type="Pfam" id="PF08459">
    <property type="entry name" value="UvrC_RNaseH_dom"/>
    <property type="match status" value="1"/>
</dbReference>
<dbReference type="SMART" id="SM00465">
    <property type="entry name" value="GIYc"/>
    <property type="match status" value="1"/>
</dbReference>
<dbReference type="SMART" id="SM00278">
    <property type="entry name" value="HhH1"/>
    <property type="match status" value="2"/>
</dbReference>
<dbReference type="SUPFAM" id="SSF46600">
    <property type="entry name" value="C-terminal UvrC-binding domain of UvrB"/>
    <property type="match status" value="1"/>
</dbReference>
<dbReference type="SUPFAM" id="SSF82771">
    <property type="entry name" value="GIY-YIG endonuclease"/>
    <property type="match status" value="1"/>
</dbReference>
<dbReference type="SUPFAM" id="SSF47781">
    <property type="entry name" value="RuvA domain 2-like"/>
    <property type="match status" value="1"/>
</dbReference>
<dbReference type="PROSITE" id="PS50164">
    <property type="entry name" value="GIY_YIG"/>
    <property type="match status" value="1"/>
</dbReference>
<dbReference type="PROSITE" id="PS50151">
    <property type="entry name" value="UVR"/>
    <property type="match status" value="1"/>
</dbReference>
<dbReference type="PROSITE" id="PS50165">
    <property type="entry name" value="UVRC"/>
    <property type="match status" value="1"/>
</dbReference>
<sequence>MPDDFNLKSFLADLPHLPGVYRHLDAAGEVMYVGKARDLKKRVSSYFQKNLASPRIAQMVAKVASVDVTVTRSEAEALLLENNLIKSLRPRYNILFRDDKSYPYLLITGHAWPRIAYYRGATSKRGQYFGPYPNSWAVRETIQILQKVFRLRTCEDTVFANRSRPCLLHQIGRCSAPCVGVIEAGDYAHDVQRAVRFLNGEAREVMDEIEARMLQASTELRFEEAAVLRDQMGSLSKVLHQQTMENVGGDDTDVIAVASAGGKICVNLAMVRGGRHLGDKPFFPTHAEGEQPAQVLEAFVAQHYADGAMPPVLVCSHALPDSGLVGLLAEQGGTRAARVLTRPQGVRRSWLEQAQKNAEMALARALTESGARAGRTLALAEALDLDTDEESLDALRIECFDISHTAGEATQASCVVFLHHDMQPSLYRRYNIVGITPGDDYAAMRQVLTRRFGKVADGEAPMPGLVLIDGGKGQVEVARQVFVELGLDIQSLVGVAKGEGRKVGLETLVFADGRPPVALGKESAALMLIAQVRDEAHRFAITGMRARRAKTRNVSRLEEIEGIGARRRQRLLARFGGLSGVSSASIEDLASVEGISQELAVRIYDALHG</sequence>
<reference key="1">
    <citation type="journal article" date="2003" name="Nat. Genet.">
        <title>Comparative analysis of the genome sequences of Bordetella pertussis, Bordetella parapertussis and Bordetella bronchiseptica.</title>
        <authorList>
            <person name="Parkhill J."/>
            <person name="Sebaihia M."/>
            <person name="Preston A."/>
            <person name="Murphy L.D."/>
            <person name="Thomson N.R."/>
            <person name="Harris D.E."/>
            <person name="Holden M.T.G."/>
            <person name="Churcher C.M."/>
            <person name="Bentley S.D."/>
            <person name="Mungall K.L."/>
            <person name="Cerdeno-Tarraga A.-M."/>
            <person name="Temple L."/>
            <person name="James K.D."/>
            <person name="Harris B."/>
            <person name="Quail M.A."/>
            <person name="Achtman M."/>
            <person name="Atkin R."/>
            <person name="Baker S."/>
            <person name="Basham D."/>
            <person name="Bason N."/>
            <person name="Cherevach I."/>
            <person name="Chillingworth T."/>
            <person name="Collins M."/>
            <person name="Cronin A."/>
            <person name="Davis P."/>
            <person name="Doggett J."/>
            <person name="Feltwell T."/>
            <person name="Goble A."/>
            <person name="Hamlin N."/>
            <person name="Hauser H."/>
            <person name="Holroyd S."/>
            <person name="Jagels K."/>
            <person name="Leather S."/>
            <person name="Moule S."/>
            <person name="Norberczak H."/>
            <person name="O'Neil S."/>
            <person name="Ormond D."/>
            <person name="Price C."/>
            <person name="Rabbinowitsch E."/>
            <person name="Rutter S."/>
            <person name="Sanders M."/>
            <person name="Saunders D."/>
            <person name="Seeger K."/>
            <person name="Sharp S."/>
            <person name="Simmonds M."/>
            <person name="Skelton J."/>
            <person name="Squares R."/>
            <person name="Squares S."/>
            <person name="Stevens K."/>
            <person name="Unwin L."/>
            <person name="Whitehead S."/>
            <person name="Barrell B.G."/>
            <person name="Maskell D.J."/>
        </authorList>
    </citation>
    <scope>NUCLEOTIDE SEQUENCE [LARGE SCALE GENOMIC DNA]</scope>
    <source>
        <strain>ATCC BAA-588 / NCTC 13252 / RB50</strain>
    </source>
</reference>
<proteinExistence type="inferred from homology"/>
<gene>
    <name evidence="1" type="primary">uvrC</name>
    <name type="ordered locus">BB3343</name>
</gene>
<evidence type="ECO:0000255" key="1">
    <source>
        <dbReference type="HAMAP-Rule" id="MF_00203"/>
    </source>
</evidence>
<evidence type="ECO:0000305" key="2"/>
<accession>Q7WH66</accession>
<organism>
    <name type="scientific">Bordetella bronchiseptica (strain ATCC BAA-588 / NCTC 13252 / RB50)</name>
    <name type="common">Alcaligenes bronchisepticus</name>
    <dbReference type="NCBI Taxonomy" id="257310"/>
    <lineage>
        <taxon>Bacteria</taxon>
        <taxon>Pseudomonadati</taxon>
        <taxon>Pseudomonadota</taxon>
        <taxon>Betaproteobacteria</taxon>
        <taxon>Burkholderiales</taxon>
        <taxon>Alcaligenaceae</taxon>
        <taxon>Bordetella</taxon>
    </lineage>
</organism>